<name>FABH_LACH4</name>
<feature type="chain" id="PRO_1000073681" description="Beta-ketoacyl-[acyl-carrier-protein] synthase III">
    <location>
        <begin position="1"/>
        <end position="327"/>
    </location>
</feature>
<feature type="region of interest" description="ACP-binding" evidence="1">
    <location>
        <begin position="255"/>
        <end position="259"/>
    </location>
</feature>
<feature type="active site" evidence="1">
    <location>
        <position position="114"/>
    </location>
</feature>
<feature type="active site" evidence="1">
    <location>
        <position position="254"/>
    </location>
</feature>
<feature type="active site" evidence="1">
    <location>
        <position position="284"/>
    </location>
</feature>
<dbReference type="EC" id="2.3.1.180" evidence="1"/>
<dbReference type="EMBL" id="CP000517">
    <property type="protein sequence ID" value="ABX27770.1"/>
    <property type="molecule type" value="Genomic_DNA"/>
</dbReference>
<dbReference type="RefSeq" id="WP_003625237.1">
    <property type="nucleotide sequence ID" value="NC_010080.1"/>
</dbReference>
<dbReference type="SMR" id="A8YXS0"/>
<dbReference type="KEGG" id="lhe:lhv_1932"/>
<dbReference type="eggNOG" id="COG0332">
    <property type="taxonomic scope" value="Bacteria"/>
</dbReference>
<dbReference type="HOGENOM" id="CLU_039592_4_1_9"/>
<dbReference type="UniPathway" id="UPA00094"/>
<dbReference type="Proteomes" id="UP000000790">
    <property type="component" value="Chromosome"/>
</dbReference>
<dbReference type="GO" id="GO:0005737">
    <property type="term" value="C:cytoplasm"/>
    <property type="evidence" value="ECO:0007669"/>
    <property type="project" value="UniProtKB-SubCell"/>
</dbReference>
<dbReference type="GO" id="GO:0004315">
    <property type="term" value="F:3-oxoacyl-[acyl-carrier-protein] synthase activity"/>
    <property type="evidence" value="ECO:0007669"/>
    <property type="project" value="InterPro"/>
</dbReference>
<dbReference type="GO" id="GO:0033818">
    <property type="term" value="F:beta-ketoacyl-acyl-carrier-protein synthase III activity"/>
    <property type="evidence" value="ECO:0007669"/>
    <property type="project" value="UniProtKB-UniRule"/>
</dbReference>
<dbReference type="GO" id="GO:0006633">
    <property type="term" value="P:fatty acid biosynthetic process"/>
    <property type="evidence" value="ECO:0007669"/>
    <property type="project" value="UniProtKB-UniRule"/>
</dbReference>
<dbReference type="GO" id="GO:0044550">
    <property type="term" value="P:secondary metabolite biosynthetic process"/>
    <property type="evidence" value="ECO:0007669"/>
    <property type="project" value="TreeGrafter"/>
</dbReference>
<dbReference type="CDD" id="cd00830">
    <property type="entry name" value="KAS_III"/>
    <property type="match status" value="1"/>
</dbReference>
<dbReference type="Gene3D" id="3.40.47.10">
    <property type="match status" value="1"/>
</dbReference>
<dbReference type="HAMAP" id="MF_01815">
    <property type="entry name" value="FabH"/>
    <property type="match status" value="1"/>
</dbReference>
<dbReference type="InterPro" id="IPR013747">
    <property type="entry name" value="ACP_syn_III_C"/>
</dbReference>
<dbReference type="InterPro" id="IPR013751">
    <property type="entry name" value="ACP_syn_III_N"/>
</dbReference>
<dbReference type="InterPro" id="IPR004655">
    <property type="entry name" value="FabH"/>
</dbReference>
<dbReference type="InterPro" id="IPR016039">
    <property type="entry name" value="Thiolase-like"/>
</dbReference>
<dbReference type="NCBIfam" id="TIGR00747">
    <property type="entry name" value="fabH"/>
    <property type="match status" value="1"/>
</dbReference>
<dbReference type="NCBIfam" id="NF006829">
    <property type="entry name" value="PRK09352.1"/>
    <property type="match status" value="1"/>
</dbReference>
<dbReference type="PANTHER" id="PTHR34069">
    <property type="entry name" value="3-OXOACYL-[ACYL-CARRIER-PROTEIN] SYNTHASE 3"/>
    <property type="match status" value="1"/>
</dbReference>
<dbReference type="PANTHER" id="PTHR34069:SF2">
    <property type="entry name" value="BETA-KETOACYL-[ACYL-CARRIER-PROTEIN] SYNTHASE III"/>
    <property type="match status" value="1"/>
</dbReference>
<dbReference type="Pfam" id="PF08545">
    <property type="entry name" value="ACP_syn_III"/>
    <property type="match status" value="1"/>
</dbReference>
<dbReference type="Pfam" id="PF08541">
    <property type="entry name" value="ACP_syn_III_C"/>
    <property type="match status" value="1"/>
</dbReference>
<dbReference type="SUPFAM" id="SSF53901">
    <property type="entry name" value="Thiolase-like"/>
    <property type="match status" value="1"/>
</dbReference>
<gene>
    <name evidence="1" type="primary">fabH</name>
    <name type="ordered locus">lhv_1932</name>
</gene>
<reference key="1">
    <citation type="journal article" date="2008" name="J. Bacteriol.">
        <title>Genome sequence of Lactobacillus helveticus: an organism distinguished by selective gene loss and IS element expansion.</title>
        <authorList>
            <person name="Callanan M."/>
            <person name="Kaleta P."/>
            <person name="O'Callaghan J."/>
            <person name="O'Sullivan O."/>
            <person name="Jordan K."/>
            <person name="McAuliffe O."/>
            <person name="Sangrador-Vegas A."/>
            <person name="Slattery L."/>
            <person name="Fitzgerald G.F."/>
            <person name="Beresford T."/>
            <person name="Ross R.P."/>
        </authorList>
    </citation>
    <scope>NUCLEOTIDE SEQUENCE [LARGE SCALE GENOMIC DNA]</scope>
    <source>
        <strain>DPC 4571</strain>
    </source>
</reference>
<keyword id="KW-0012">Acyltransferase</keyword>
<keyword id="KW-0963">Cytoplasm</keyword>
<keyword id="KW-0275">Fatty acid biosynthesis</keyword>
<keyword id="KW-0276">Fatty acid metabolism</keyword>
<keyword id="KW-0444">Lipid biosynthesis</keyword>
<keyword id="KW-0443">Lipid metabolism</keyword>
<keyword id="KW-0511">Multifunctional enzyme</keyword>
<keyword id="KW-0808">Transferase</keyword>
<organism>
    <name type="scientific">Lactobacillus helveticus (strain DPC 4571)</name>
    <dbReference type="NCBI Taxonomy" id="405566"/>
    <lineage>
        <taxon>Bacteria</taxon>
        <taxon>Bacillati</taxon>
        <taxon>Bacillota</taxon>
        <taxon>Bacilli</taxon>
        <taxon>Lactobacillales</taxon>
        <taxon>Lactobacillaceae</taxon>
        <taxon>Lactobacillus</taxon>
    </lineage>
</organism>
<protein>
    <recommendedName>
        <fullName evidence="1">Beta-ketoacyl-[acyl-carrier-protein] synthase III</fullName>
        <shortName evidence="1">Beta-ketoacyl-ACP synthase III</shortName>
        <shortName evidence="1">KAS III</shortName>
        <ecNumber evidence="1">2.3.1.180</ecNumber>
    </recommendedName>
    <alternativeName>
        <fullName evidence="1">3-oxoacyl-[acyl-carrier-protein] synthase 3</fullName>
    </alternativeName>
    <alternativeName>
        <fullName evidence="1">3-oxoacyl-[acyl-carrier-protein] synthase III</fullName>
    </alternativeName>
</protein>
<proteinExistence type="inferred from homology"/>
<sequence length="327" mass="35344">MKFEDFKIMATASSAPDHVVTNDELATMMDTSDEWITQRTGIKRRRIATEETTSSMCTDVATQLIAQSDLTAKDIDLIAVATMSPDYLTPSVSAMVQGNIGADHAIAFDIDAACSGFVYGLHLVKQMLIANQQKNAILIGGETLSKLLDWSDRSTAVLFGDGAGGVLIRNTAVDKGSFISEDLRTLGNLGQYLTAGQTGNPSPFATDQQPFSPFFKMSGRRVYSFAVKNVPESINDALKQANLTADEVDCFVLHQANRRIVERIADELAVSMAKFPINIDEYGNTAAASEPILLDQLVKQKIIKRGDVIALSGFGGGLTVGTMIMKY</sequence>
<evidence type="ECO:0000255" key="1">
    <source>
        <dbReference type="HAMAP-Rule" id="MF_01815"/>
    </source>
</evidence>
<comment type="function">
    <text evidence="1">Catalyzes the condensation reaction of fatty acid synthesis by the addition to an acyl acceptor of two carbons from malonyl-ACP. Catalyzes the first condensation reaction which initiates fatty acid synthesis and may therefore play a role in governing the total rate of fatty acid production. Possesses both acetoacetyl-ACP synthase and acetyl transacylase activities. Its substrate specificity determines the biosynthesis of branched-chain and/or straight-chain of fatty acids.</text>
</comment>
<comment type="catalytic activity">
    <reaction evidence="1">
        <text>malonyl-[ACP] + acetyl-CoA + H(+) = 3-oxobutanoyl-[ACP] + CO2 + CoA</text>
        <dbReference type="Rhea" id="RHEA:12080"/>
        <dbReference type="Rhea" id="RHEA-COMP:9623"/>
        <dbReference type="Rhea" id="RHEA-COMP:9625"/>
        <dbReference type="ChEBI" id="CHEBI:15378"/>
        <dbReference type="ChEBI" id="CHEBI:16526"/>
        <dbReference type="ChEBI" id="CHEBI:57287"/>
        <dbReference type="ChEBI" id="CHEBI:57288"/>
        <dbReference type="ChEBI" id="CHEBI:78449"/>
        <dbReference type="ChEBI" id="CHEBI:78450"/>
        <dbReference type="EC" id="2.3.1.180"/>
    </reaction>
</comment>
<comment type="pathway">
    <text evidence="1">Lipid metabolism; fatty acid biosynthesis.</text>
</comment>
<comment type="subunit">
    <text evidence="1">Homodimer.</text>
</comment>
<comment type="subcellular location">
    <subcellularLocation>
        <location evidence="1">Cytoplasm</location>
    </subcellularLocation>
</comment>
<comment type="domain">
    <text evidence="1">The last Arg residue of the ACP-binding site is essential for the weak association between ACP/AcpP and FabH.</text>
</comment>
<comment type="similarity">
    <text evidence="1">Belongs to the thiolase-like superfamily. FabH family.</text>
</comment>
<accession>A8YXS0</accession>